<evidence type="ECO:0000250" key="1"/>
<evidence type="ECO:0000255" key="2"/>
<evidence type="ECO:0000305" key="3"/>
<sequence length="370" mass="38148">MPRSLFRTVLTALVAASCLIAAPALAKSRIKDIVSFEGVRENQLIGYGIVVGLNGTGDSLRNAPMTKQSLEAMLERQGVNVRDNNLNTKNTAAVMVTANLPPFSASGSKVDVTVSTLGDAKSLLGGTLLVTSLQGADGQTYAVAQGTVQTGSVSAGGASGSSVTKGVPTAGRIAGGGVIERETGFQMVNMDIMRLTLRNPDFTTARRVADAINAKFPGCAQAQNPTIIATRPPPGMDMISFMTNIENLMVEPDGPAKVVIDEVAGVIVMGDDVRISQVAIAQGNLTITVQENPAVSQPAPFSQGQTAVVPQSTVNVEEEKGKQLLTLGGAPSLKGLIGGLNALGVTPRDMISILQAVKAAGALQADIEVM</sequence>
<proteinExistence type="inferred from homology"/>
<feature type="signal peptide" evidence="2">
    <location>
        <begin position="1"/>
        <end position="26"/>
    </location>
</feature>
<feature type="chain" id="PRO_0000009499" description="Flagellar P-ring protein">
    <location>
        <begin position="27"/>
        <end position="370"/>
    </location>
</feature>
<comment type="function">
    <text>Assembles around the rod to form the L-ring and probably protects the motor/basal body from shearing forces during rotation.</text>
</comment>
<comment type="subunit">
    <text evidence="1">The basal body constitutes a major portion of the flagellar organelle and consists of five rings (E,L,P,S, and M) mounted on a central rod.</text>
</comment>
<comment type="subcellular location">
    <subcellularLocation>
        <location>Periplasm</location>
    </subcellularLocation>
    <subcellularLocation>
        <location>Bacterial flagellum basal body</location>
    </subcellularLocation>
</comment>
<comment type="similarity">
    <text evidence="3">Belongs to the FlgI family.</text>
</comment>
<reference key="1">
    <citation type="journal article" date="1992" name="J. Bacteriol.">
        <title>Molecular genetics of the flgI region and its role in flagellum biosynthesis in Caulobacter crescentus.</title>
        <authorList>
            <person name="Khambaty F.M."/>
            <person name="Ely B."/>
        </authorList>
    </citation>
    <scope>NUCLEOTIDE SEQUENCE [GENOMIC DNA]</scope>
    <source>
        <strain>ATCC 19089 / CIP 103742 / CB 15</strain>
    </source>
</reference>
<reference key="2">
    <citation type="journal article" date="2001" name="Proc. Natl. Acad. Sci. U.S.A.">
        <title>Complete genome sequence of Caulobacter crescentus.</title>
        <authorList>
            <person name="Nierman W.C."/>
            <person name="Feldblyum T.V."/>
            <person name="Laub M.T."/>
            <person name="Paulsen I.T."/>
            <person name="Nelson K.E."/>
            <person name="Eisen J.A."/>
            <person name="Heidelberg J.F."/>
            <person name="Alley M.R.K."/>
            <person name="Ohta N."/>
            <person name="Maddock J.R."/>
            <person name="Potocka I."/>
            <person name="Nelson W.C."/>
            <person name="Newton A."/>
            <person name="Stephens C."/>
            <person name="Phadke N.D."/>
            <person name="Ely B."/>
            <person name="DeBoy R.T."/>
            <person name="Dodson R.J."/>
            <person name="Durkin A.S."/>
            <person name="Gwinn M.L."/>
            <person name="Haft D.H."/>
            <person name="Kolonay J.F."/>
            <person name="Smit J."/>
            <person name="Craven M.B."/>
            <person name="Khouri H.M."/>
            <person name="Shetty J."/>
            <person name="Berry K.J."/>
            <person name="Utterback T.R."/>
            <person name="Tran K."/>
            <person name="Wolf A.M."/>
            <person name="Vamathevan J.J."/>
            <person name="Ermolaeva M.D."/>
            <person name="White O."/>
            <person name="Salzberg S.L."/>
            <person name="Venter J.C."/>
            <person name="Shapiro L."/>
            <person name="Fraser C.M."/>
        </authorList>
    </citation>
    <scope>NUCLEOTIDE SEQUENCE [LARGE SCALE GENOMIC DNA]</scope>
    <source>
        <strain>ATCC 19089 / CIP 103742 / CB 15</strain>
    </source>
</reference>
<accession>P33979</accession>
<keyword id="KW-0975">Bacterial flagellum</keyword>
<keyword id="KW-0574">Periplasm</keyword>
<keyword id="KW-1185">Reference proteome</keyword>
<keyword id="KW-0732">Signal</keyword>
<organism>
    <name type="scientific">Caulobacter vibrioides (strain ATCC 19089 / CIP 103742 / CB 15)</name>
    <name type="common">Caulobacter crescentus</name>
    <dbReference type="NCBI Taxonomy" id="190650"/>
    <lineage>
        <taxon>Bacteria</taxon>
        <taxon>Pseudomonadati</taxon>
        <taxon>Pseudomonadota</taxon>
        <taxon>Alphaproteobacteria</taxon>
        <taxon>Caulobacterales</taxon>
        <taxon>Caulobacteraceae</taxon>
        <taxon>Caulobacter</taxon>
    </lineage>
</organism>
<gene>
    <name type="primary">flgI</name>
    <name type="synonym">flaP</name>
    <name type="ordered locus">CC_2582</name>
</gene>
<dbReference type="EMBL" id="M91448">
    <property type="protein sequence ID" value="AAB83950.1"/>
    <property type="molecule type" value="Genomic_DNA"/>
</dbReference>
<dbReference type="EMBL" id="AE005673">
    <property type="protein sequence ID" value="AAK24552.1"/>
    <property type="molecule type" value="Genomic_DNA"/>
</dbReference>
<dbReference type="PIR" id="A41891">
    <property type="entry name" value="A41891"/>
</dbReference>
<dbReference type="RefSeq" id="NP_421384.1">
    <property type="nucleotide sequence ID" value="NC_002696.2"/>
</dbReference>
<dbReference type="RefSeq" id="WP_010920438.1">
    <property type="nucleotide sequence ID" value="NC_002696.2"/>
</dbReference>
<dbReference type="SMR" id="P33979"/>
<dbReference type="STRING" id="190650.CC_2582"/>
<dbReference type="EnsemblBacteria" id="AAK24552">
    <property type="protein sequence ID" value="AAK24552"/>
    <property type="gene ID" value="CC_2582"/>
</dbReference>
<dbReference type="KEGG" id="ccr:CC_2582"/>
<dbReference type="PATRIC" id="fig|190650.5.peg.2596"/>
<dbReference type="eggNOG" id="COG1706">
    <property type="taxonomic scope" value="Bacteria"/>
</dbReference>
<dbReference type="HOGENOM" id="CLU_045235_1_0_5"/>
<dbReference type="BioCyc" id="CAULO:CC2582-MONOMER"/>
<dbReference type="Proteomes" id="UP000001816">
    <property type="component" value="Chromosome"/>
</dbReference>
<dbReference type="GO" id="GO:0009428">
    <property type="term" value="C:bacterial-type flagellum basal body, distal rod, P ring"/>
    <property type="evidence" value="ECO:0007669"/>
    <property type="project" value="InterPro"/>
</dbReference>
<dbReference type="GO" id="GO:0030288">
    <property type="term" value="C:outer membrane-bounded periplasmic space"/>
    <property type="evidence" value="ECO:0007669"/>
    <property type="project" value="InterPro"/>
</dbReference>
<dbReference type="GO" id="GO:0005198">
    <property type="term" value="F:structural molecule activity"/>
    <property type="evidence" value="ECO:0007669"/>
    <property type="project" value="InterPro"/>
</dbReference>
<dbReference type="GO" id="GO:0071973">
    <property type="term" value="P:bacterial-type flagellum-dependent cell motility"/>
    <property type="evidence" value="ECO:0007669"/>
    <property type="project" value="InterPro"/>
</dbReference>
<dbReference type="HAMAP" id="MF_00416">
    <property type="entry name" value="FlgI"/>
    <property type="match status" value="1"/>
</dbReference>
<dbReference type="InterPro" id="IPR001782">
    <property type="entry name" value="Flag_FlgI"/>
</dbReference>
<dbReference type="NCBIfam" id="NF003676">
    <property type="entry name" value="PRK05303.1"/>
    <property type="match status" value="1"/>
</dbReference>
<dbReference type="PANTHER" id="PTHR30381">
    <property type="entry name" value="FLAGELLAR P-RING PERIPLASMIC PROTEIN FLGI"/>
    <property type="match status" value="1"/>
</dbReference>
<dbReference type="PANTHER" id="PTHR30381:SF0">
    <property type="entry name" value="FLAGELLAR P-RING PROTEIN"/>
    <property type="match status" value="1"/>
</dbReference>
<dbReference type="Pfam" id="PF02119">
    <property type="entry name" value="FlgI"/>
    <property type="match status" value="1"/>
</dbReference>
<dbReference type="PRINTS" id="PR01010">
    <property type="entry name" value="FLGPRINGFLGI"/>
</dbReference>
<name>FLGI_CAUVC</name>
<protein>
    <recommendedName>
        <fullName>Flagellar P-ring protein</fullName>
    </recommendedName>
    <alternativeName>
        <fullName>Basal body P-ring protein</fullName>
    </alternativeName>
</protein>